<dbReference type="EMBL" id="M17447">
    <property type="protein sequence ID" value="AAA69969.1"/>
    <property type="status" value="ALT_SEQ"/>
    <property type="molecule type" value="mRNA"/>
</dbReference>
<dbReference type="PIR" id="A60083">
    <property type="entry name" value="A60083"/>
</dbReference>
<dbReference type="SMR" id="P31272"/>
<dbReference type="AGR" id="Xenbase:XB-GENE-17342281"/>
<dbReference type="Xenbase" id="XB-GENE-17342281">
    <property type="gene designation" value="hoxb9.S"/>
</dbReference>
<dbReference type="Proteomes" id="UP000186698">
    <property type="component" value="Unplaced"/>
</dbReference>
<dbReference type="GO" id="GO:0005634">
    <property type="term" value="C:nucleus"/>
    <property type="evidence" value="ECO:0000318"/>
    <property type="project" value="GO_Central"/>
</dbReference>
<dbReference type="GO" id="GO:0003700">
    <property type="term" value="F:DNA-binding transcription factor activity"/>
    <property type="evidence" value="ECO:0000318"/>
    <property type="project" value="GO_Central"/>
</dbReference>
<dbReference type="GO" id="GO:0000981">
    <property type="term" value="F:DNA-binding transcription factor activity, RNA polymerase II-specific"/>
    <property type="evidence" value="ECO:0007669"/>
    <property type="project" value="InterPro"/>
</dbReference>
<dbReference type="GO" id="GO:0000978">
    <property type="term" value="F:RNA polymerase II cis-regulatory region sequence-specific DNA binding"/>
    <property type="evidence" value="ECO:0000318"/>
    <property type="project" value="GO_Central"/>
</dbReference>
<dbReference type="GO" id="GO:0009952">
    <property type="term" value="P:anterior/posterior pattern specification"/>
    <property type="evidence" value="ECO:0000318"/>
    <property type="project" value="GO_Central"/>
</dbReference>
<dbReference type="GO" id="GO:0006351">
    <property type="term" value="P:DNA-templated transcription"/>
    <property type="evidence" value="ECO:0007669"/>
    <property type="project" value="InterPro"/>
</dbReference>
<dbReference type="GO" id="GO:0048704">
    <property type="term" value="P:embryonic skeletal system morphogenesis"/>
    <property type="evidence" value="ECO:0000318"/>
    <property type="project" value="GO_Central"/>
</dbReference>
<dbReference type="GO" id="GO:0009954">
    <property type="term" value="P:proximal/distal pattern formation"/>
    <property type="evidence" value="ECO:0000318"/>
    <property type="project" value="GO_Central"/>
</dbReference>
<dbReference type="GO" id="GO:0006357">
    <property type="term" value="P:regulation of transcription by RNA polymerase II"/>
    <property type="evidence" value="ECO:0000318"/>
    <property type="project" value="GO_Central"/>
</dbReference>
<dbReference type="CDD" id="cd00086">
    <property type="entry name" value="homeodomain"/>
    <property type="match status" value="1"/>
</dbReference>
<dbReference type="Gene3D" id="1.10.10.60">
    <property type="entry name" value="Homeodomain-like"/>
    <property type="match status" value="1"/>
</dbReference>
<dbReference type="InterPro" id="IPR050803">
    <property type="entry name" value="Abd-B_homeobox_TF"/>
</dbReference>
<dbReference type="InterPro" id="IPR001356">
    <property type="entry name" value="HD"/>
</dbReference>
<dbReference type="InterPro" id="IPR020479">
    <property type="entry name" value="HD_metazoa"/>
</dbReference>
<dbReference type="InterPro" id="IPR017970">
    <property type="entry name" value="Homeobox_CS"/>
</dbReference>
<dbReference type="InterPro" id="IPR009057">
    <property type="entry name" value="Homeodomain-like_sf"/>
</dbReference>
<dbReference type="InterPro" id="IPR006711">
    <property type="entry name" value="Hox9_activation_N"/>
</dbReference>
<dbReference type="InterPro" id="IPR017112">
    <property type="entry name" value="HXA9/HXB9/HXC9"/>
</dbReference>
<dbReference type="PANTHER" id="PTHR45970">
    <property type="entry name" value="AGAP004664-PA"/>
    <property type="match status" value="1"/>
</dbReference>
<dbReference type="PANTHER" id="PTHR45970:SF5">
    <property type="entry name" value="HOMEOBOX PROTEIN HOX-B9"/>
    <property type="match status" value="1"/>
</dbReference>
<dbReference type="Pfam" id="PF00046">
    <property type="entry name" value="Homeodomain"/>
    <property type="match status" value="1"/>
</dbReference>
<dbReference type="Pfam" id="PF04617">
    <property type="entry name" value="Hox9_act"/>
    <property type="match status" value="1"/>
</dbReference>
<dbReference type="PIRSF" id="PIRSF037109">
    <property type="entry name" value="Homeobox_Hox9"/>
    <property type="match status" value="1"/>
</dbReference>
<dbReference type="PRINTS" id="PR00024">
    <property type="entry name" value="HOMEOBOX"/>
</dbReference>
<dbReference type="SMART" id="SM00389">
    <property type="entry name" value="HOX"/>
    <property type="match status" value="1"/>
</dbReference>
<dbReference type="SUPFAM" id="SSF46689">
    <property type="entry name" value="Homeodomain-like"/>
    <property type="match status" value="1"/>
</dbReference>
<dbReference type="PROSITE" id="PS00027">
    <property type="entry name" value="HOMEOBOX_1"/>
    <property type="match status" value="1"/>
</dbReference>
<dbReference type="PROSITE" id="PS50071">
    <property type="entry name" value="HOMEOBOX_2"/>
    <property type="match status" value="1"/>
</dbReference>
<accession>P31272</accession>
<gene>
    <name type="primary">hoxb9</name>
</gene>
<keyword id="KW-0217">Developmental protein</keyword>
<keyword id="KW-0238">DNA-binding</keyword>
<keyword id="KW-0371">Homeobox</keyword>
<keyword id="KW-0539">Nucleus</keyword>
<keyword id="KW-1185">Reference proteome</keyword>
<keyword id="KW-0804">Transcription</keyword>
<keyword id="KW-0805">Transcription regulation</keyword>
<comment type="function">
    <text evidence="5">Sequence-specific transcription factor which is part of a developmental regulatory system that provides cells with specific positional identities on the anterior-posterior axis.</text>
</comment>
<comment type="subcellular location">
    <subcellularLocation>
        <location evidence="1 4">Nucleus</location>
    </subcellularLocation>
</comment>
<comment type="induction">
    <text evidence="3">By derriere.</text>
</comment>
<comment type="similarity">
    <text evidence="6">Belongs to the Abd-B homeobox family.</text>
</comment>
<name>HXB9_XENLA</name>
<evidence type="ECO:0000255" key="1">
    <source>
        <dbReference type="PROSITE-ProRule" id="PRU00108"/>
    </source>
</evidence>
<evidence type="ECO:0000256" key="2">
    <source>
        <dbReference type="SAM" id="MobiDB-lite"/>
    </source>
</evidence>
<evidence type="ECO:0000269" key="3">
    <source>
    </source>
</evidence>
<evidence type="ECO:0000269" key="4">
    <source>
    </source>
</evidence>
<evidence type="ECO:0000269" key="5">
    <source>
    </source>
</evidence>
<evidence type="ECO:0000305" key="6"/>
<reference key="1">
    <citation type="journal article" date="1990" name="Development">
        <title>The Xenopus XIHbox 6 homeo protein, a marker of posterior neural induction, is expressed in proliferating neurons.</title>
        <authorList>
            <person name="Wright C.V.E."/>
            <person name="Morita E.A."/>
            <person name="Wilkin D.J."/>
            <person name="De Robertis E.M."/>
        </authorList>
    </citation>
    <scope>NUCLEOTIDE SEQUENCE [MRNA]</scope>
    <scope>SUBCELLULAR LOCATION</scope>
    <scope>TISSUE SPECIFICITY</scope>
</reference>
<reference key="2">
    <citation type="journal article" date="1987" name="Cell">
        <title>A homeobox-containing marker of posterior neural differentiation shows the importance of predetermination in neural induction.</title>
        <authorList>
            <person name="Sharpe C.R."/>
            <person name="Fritz A."/>
            <person name="De Robertis E.M."/>
            <person name="Gurdon J.B."/>
        </authorList>
    </citation>
    <scope>NUCLEOTIDE SEQUENCE [MRNA] OF 1-186</scope>
    <scope>FUNCTION</scope>
    <source>
        <tissue>Gastrula</tissue>
    </source>
</reference>
<reference key="3">
    <citation type="journal article" date="1999" name="Development">
        <title>derriere: a TGF-beta family member required for posterior development in Xenopus.</title>
        <authorList>
            <person name="Sun B.I."/>
            <person name="Bush S.M."/>
            <person name="Collins-Racie L.A."/>
            <person name="LaVallie E.R."/>
            <person name="DiBlasio-Smith E.A."/>
            <person name="Wolfman N.M."/>
            <person name="McCoy J.M."/>
            <person name="Sive H.L."/>
        </authorList>
    </citation>
    <scope>INDUCTION</scope>
</reference>
<organism>
    <name type="scientific">Xenopus laevis</name>
    <name type="common">African clawed frog</name>
    <dbReference type="NCBI Taxonomy" id="8355"/>
    <lineage>
        <taxon>Eukaryota</taxon>
        <taxon>Metazoa</taxon>
        <taxon>Chordata</taxon>
        <taxon>Craniata</taxon>
        <taxon>Vertebrata</taxon>
        <taxon>Euteleostomi</taxon>
        <taxon>Amphibia</taxon>
        <taxon>Batrachia</taxon>
        <taxon>Anura</taxon>
        <taxon>Pipoidea</taxon>
        <taxon>Pipidae</taxon>
        <taxon>Xenopodinae</taxon>
        <taxon>Xenopus</taxon>
        <taxon>Xenopus</taxon>
    </lineage>
</organism>
<protein>
    <recommendedName>
        <fullName>Homeobox protein Hox-B9</fullName>
    </recommendedName>
    <alternativeName>
        <fullName>XlHbox-6</fullName>
    </alternativeName>
</protein>
<feature type="chain" id="PRO_0000200158" description="Homeobox protein Hox-B9">
    <location>
        <begin position="1"/>
        <end position="232"/>
    </location>
</feature>
<feature type="DNA-binding region" description="Homeobox" evidence="1">
    <location>
        <begin position="167"/>
        <end position="226"/>
    </location>
</feature>
<feature type="region of interest" description="Disordered" evidence="2">
    <location>
        <begin position="22"/>
        <end position="43"/>
    </location>
</feature>
<feature type="region of interest" description="Disordered" evidence="2">
    <location>
        <begin position="116"/>
        <end position="167"/>
    </location>
</feature>
<feature type="sequence conflict" description="In Ref. 2." evidence="6" ref="2">
    <original>MAISGPLTNYFVQSIISPDTDETPAAKFSAQFPN</original>
    <variation>MGLDAHRVARLDLARIPLCAIPQ</variation>
    <location>
        <begin position="1"/>
        <end position="34"/>
    </location>
</feature>
<feature type="sequence conflict" description="In Ref. 2; AAA69969." evidence="6" ref="2">
    <original>F</original>
    <variation>P</variation>
    <location>
        <position position="57"/>
    </location>
</feature>
<feature type="sequence conflict" description="In Ref. 2; AAA69969." evidence="6" ref="2">
    <location>
        <position position="75"/>
    </location>
</feature>
<feature type="sequence conflict" description="In Ref. 2; AAA69969." evidence="6" ref="2">
    <original>DKLGPQHYTVAS</original>
    <variation>TNWDPNITLWP</variation>
    <location>
        <begin position="108"/>
        <end position="119"/>
    </location>
</feature>
<feature type="sequence conflict" description="In Ref. 2; AAA69969." evidence="6" ref="2">
    <original>E</original>
    <variation>D</variation>
    <location>
        <position position="148"/>
    </location>
</feature>
<sequence>MAISGPLTNYFVQSIISPDTDETPAAKFSAQFPNPRAPAQSEPLDFPSCSFSASWNFLTPHPPVYQPYIQQQQQQEEGAPSAEGRYLRAWLDNGPSLKSEPLLGPPGDKLGPQHYTVASPGGAAANTERSTHSGNFPDTKGTEGTAGETDRTHQNNPSANWLHARSSRKKRCPYSKYQTLELEKEFKFNMYLTRDRRHEVARLLNLSERQVKIWFQNRRMKMKKLNKDQSKD</sequence>
<proteinExistence type="evidence at transcript level"/>